<proteinExistence type="evidence at protein level"/>
<keyword id="KW-0020">Allergen</keyword>
<keyword id="KW-0903">Direct protein sequencing</keyword>
<keyword id="KW-1015">Disulfide bond</keyword>
<keyword id="KW-0446">Lipid-binding</keyword>
<keyword id="KW-0813">Transport</keyword>
<name>NLTP2_APIGA</name>
<organism>
    <name type="scientific">Apium graveolens var. rapaceum</name>
    <name type="common">Celeriac</name>
    <dbReference type="NCBI Taxonomy" id="278110"/>
    <lineage>
        <taxon>Eukaryota</taxon>
        <taxon>Viridiplantae</taxon>
        <taxon>Streptophyta</taxon>
        <taxon>Embryophyta</taxon>
        <taxon>Tracheophyta</taxon>
        <taxon>Spermatophyta</taxon>
        <taxon>Magnoliopsida</taxon>
        <taxon>eudicotyledons</taxon>
        <taxon>Gunneridae</taxon>
        <taxon>Pentapetalae</taxon>
        <taxon>asterids</taxon>
        <taxon>campanulids</taxon>
        <taxon>Apiales</taxon>
        <taxon>Apiaceae</taxon>
        <taxon>Apioideae</taxon>
        <taxon>apioid superclade</taxon>
        <taxon>Apieae</taxon>
        <taxon>Apium</taxon>
    </lineage>
</organism>
<feature type="chain" id="PRO_0000424147" description="Non-specific lipid-transfer protein 2">
    <location>
        <begin position="1"/>
        <end position="67"/>
    </location>
</feature>
<feature type="disulfide bond" evidence="1">
    <location>
        <begin position="3"/>
        <end position="35"/>
    </location>
</feature>
<feature type="disulfide bond" evidence="1">
    <location>
        <begin position="11"/>
        <end position="25"/>
    </location>
</feature>
<feature type="disulfide bond" evidence="1">
    <location>
        <begin position="26"/>
        <end position="61"/>
    </location>
</feature>
<feature type="disulfide bond" evidence="1">
    <location>
        <begin position="37"/>
        <end position="67"/>
    </location>
</feature>
<dbReference type="SMR" id="P86809"/>
<dbReference type="Allergome" id="9512">
    <property type="allergen name" value="Api g 6"/>
</dbReference>
<dbReference type="Allergome" id="9513">
    <property type="allergen name" value="Api g 6.0101"/>
</dbReference>
<dbReference type="GO" id="GO:0008289">
    <property type="term" value="F:lipid binding"/>
    <property type="evidence" value="ECO:0007669"/>
    <property type="project" value="UniProtKB-KW"/>
</dbReference>
<dbReference type="GO" id="GO:0006869">
    <property type="term" value="P:lipid transport"/>
    <property type="evidence" value="ECO:0007669"/>
    <property type="project" value="InterPro"/>
</dbReference>
<dbReference type="CDD" id="cd01959">
    <property type="entry name" value="nsLTP2"/>
    <property type="match status" value="1"/>
</dbReference>
<dbReference type="Gene3D" id="1.10.110.10">
    <property type="entry name" value="Plant lipid-transfer and hydrophobic proteins"/>
    <property type="match status" value="1"/>
</dbReference>
<dbReference type="InterPro" id="IPR036312">
    <property type="entry name" value="Bifun_inhib/LTP/seed_sf"/>
</dbReference>
<dbReference type="InterPro" id="IPR016140">
    <property type="entry name" value="Bifunc_inhib/LTP/seed_store"/>
</dbReference>
<dbReference type="InterPro" id="IPR033872">
    <property type="entry name" value="nsLTP2"/>
</dbReference>
<dbReference type="PANTHER" id="PTHR33214">
    <property type="entry name" value="BIFUNCTIONAL INHIBITOR/LIPID-TRANSFER PROTEIN/SEED STORAGE 2S ALBUMIN SUPERFAMILY PROTEIN"/>
    <property type="match status" value="1"/>
</dbReference>
<dbReference type="PANTHER" id="PTHR33214:SF69">
    <property type="entry name" value="BIFUNCTIONAL INHIBITOR_LIPID-TRANSFER PROTEIN_SEED STORAGE 2S ALBUMIN SUPERFAMILY PROTEIN"/>
    <property type="match status" value="1"/>
</dbReference>
<dbReference type="Pfam" id="PF00234">
    <property type="entry name" value="Tryp_alpha_amyl"/>
    <property type="match status" value="1"/>
</dbReference>
<dbReference type="SMART" id="SM00499">
    <property type="entry name" value="AAI"/>
    <property type="match status" value="1"/>
</dbReference>
<dbReference type="SUPFAM" id="SSF47699">
    <property type="entry name" value="Bifunctional inhibitor/lipid-transfer protein/seed storage 2S albumin"/>
    <property type="match status" value="1"/>
</dbReference>
<reference evidence="6" key="1">
    <citation type="journal article" date="2013" name="Mol. Nutr. Food Res.">
        <title>Allergenic relevance of nonspecific lipid transfer proteins 2: Identification and characterization of Api g 6 from celery tuber as representative of a novel IgE-binding protein family.</title>
        <authorList>
            <person name="Vejvar E."/>
            <person name="Himly M."/>
            <person name="Briza P."/>
            <person name="Eichhorn S."/>
            <person name="Ebner C."/>
            <person name="Hemmer W."/>
            <person name="Ferreira F."/>
            <person name="Gadermaier G."/>
        </authorList>
    </citation>
    <scope>PROTEIN SEQUENCE</scope>
    <scope>BIOPHYSICOCHEMICAL PROPERTIES</scope>
    <scope>SUBUNIT</scope>
    <scope>DISULFIDE BONDS</scope>
    <scope>MASS SPECTROMETRY</scope>
    <scope>ALLERGEN</scope>
    <scope>IGE-BINDING</scope>
    <source>
        <tissue evidence="4">Tuber</tissue>
    </source>
</reference>
<sequence length="67" mass="6945">ATCSAVQLSPCLAAITKNTPPSAACCNKLKEQKPCLCGYLKDPNLKNYVNSPGARKTASSCGVALKC</sequence>
<comment type="function">
    <text evidence="2">Plant non-specific lipid-transfer proteins transfer phospholipids as well as galactolipids across membranes. May play a role in wax or cutin deposition in the cell walls of expanding epidermal cells and certain secretory tissues (By similarity).</text>
</comment>
<comment type="biophysicochemical properties">
    <phDependence>
        <text evidence="4">Stable at pH 3.</text>
    </phDependence>
    <temperatureDependence>
        <text evidence="4">Stable up to 90 degrees Celsius.</text>
    </temperatureDependence>
</comment>
<comment type="subunit">
    <text evidence="4">Monomer.</text>
</comment>
<comment type="PTM">
    <text evidence="4">Disulfide bonds.</text>
</comment>
<comment type="mass spectrometry" mass="6936.3" method="Electrospray" evidence="4"/>
<comment type="allergen">
    <text evidence="4">Causes an allergic reaction in human. Binds to IgE.</text>
</comment>
<comment type="miscellaneous">
    <text evidence="4">Found in celeriac but not in celery. Highly resistant to pepsin and other proteinases.</text>
</comment>
<comment type="similarity">
    <text evidence="3">Belongs to the plant LTP family.</text>
</comment>
<protein>
    <recommendedName>
        <fullName evidence="5">Non-specific lipid-transfer protein 2</fullName>
    </recommendedName>
    <alternativeName>
        <fullName evidence="5">Allergen Api g 6.0101</fullName>
    </alternativeName>
    <allergenName evidence="5">Api g 6</allergenName>
</protein>
<evidence type="ECO:0000250" key="1">
    <source>
        <dbReference type="UniProtKB" id="Q10ST8"/>
    </source>
</evidence>
<evidence type="ECO:0000250" key="2">
    <source>
        <dbReference type="UniProtKB" id="Q43748"/>
    </source>
</evidence>
<evidence type="ECO:0000255" key="3"/>
<evidence type="ECO:0000269" key="4">
    <source>
    </source>
</evidence>
<evidence type="ECO:0000303" key="5">
    <source>
    </source>
</evidence>
<evidence type="ECO:0000305" key="6"/>
<accession>P86809</accession>